<keyword id="KW-0687">Ribonucleoprotein</keyword>
<keyword id="KW-0689">Ribosomal protein</keyword>
<protein>
    <recommendedName>
        <fullName evidence="1">Large ribosomal subunit protein uL29</fullName>
    </recommendedName>
    <alternativeName>
        <fullName evidence="2">50S ribosomal protein L29</fullName>
    </alternativeName>
</protein>
<accession>B5ELY7</accession>
<gene>
    <name evidence="1" type="primary">rpmC</name>
    <name type="ordered locus">Lferr_0505</name>
</gene>
<name>RL29_ACIF5</name>
<evidence type="ECO:0000255" key="1">
    <source>
        <dbReference type="HAMAP-Rule" id="MF_00374"/>
    </source>
</evidence>
<evidence type="ECO:0000305" key="2"/>
<organism>
    <name type="scientific">Acidithiobacillus ferrooxidans (strain ATCC 53993 / BNL-5-31)</name>
    <name type="common">Leptospirillum ferrooxidans (ATCC 53993)</name>
    <dbReference type="NCBI Taxonomy" id="380394"/>
    <lineage>
        <taxon>Bacteria</taxon>
        <taxon>Pseudomonadati</taxon>
        <taxon>Pseudomonadota</taxon>
        <taxon>Acidithiobacillia</taxon>
        <taxon>Acidithiobacillales</taxon>
        <taxon>Acidithiobacillaceae</taxon>
        <taxon>Acidithiobacillus</taxon>
    </lineage>
</organism>
<comment type="similarity">
    <text evidence="1">Belongs to the universal ribosomal protein uL29 family.</text>
</comment>
<reference key="1">
    <citation type="submission" date="2008-08" db="EMBL/GenBank/DDBJ databases">
        <title>Complete sequence of Acidithiobacillus ferrooxidans ATCC 53993.</title>
        <authorList>
            <person name="Lucas S."/>
            <person name="Copeland A."/>
            <person name="Lapidus A."/>
            <person name="Glavina del Rio T."/>
            <person name="Dalin E."/>
            <person name="Tice H."/>
            <person name="Bruce D."/>
            <person name="Goodwin L."/>
            <person name="Pitluck S."/>
            <person name="Sims D."/>
            <person name="Brettin T."/>
            <person name="Detter J.C."/>
            <person name="Han C."/>
            <person name="Kuske C.R."/>
            <person name="Larimer F."/>
            <person name="Land M."/>
            <person name="Hauser L."/>
            <person name="Kyrpides N."/>
            <person name="Lykidis A."/>
            <person name="Borole A.P."/>
        </authorList>
    </citation>
    <scope>NUCLEOTIDE SEQUENCE [LARGE SCALE GENOMIC DNA]</scope>
    <source>
        <strain>ATCC 53993 / BNL-5-31</strain>
    </source>
</reference>
<sequence length="65" mass="7384">MKAQAVQKLDLAGCQAQLLVLLEEQFRLRMQHATGQLAKTSRLRTVRRDIARVRTAITVKKEAHS</sequence>
<proteinExistence type="inferred from homology"/>
<feature type="chain" id="PRO_1000121722" description="Large ribosomal subunit protein uL29">
    <location>
        <begin position="1"/>
        <end position="65"/>
    </location>
</feature>
<dbReference type="EMBL" id="CP001132">
    <property type="protein sequence ID" value="ACH82759.1"/>
    <property type="molecule type" value="Genomic_DNA"/>
</dbReference>
<dbReference type="RefSeq" id="WP_009569559.1">
    <property type="nucleotide sequence ID" value="NC_011206.1"/>
</dbReference>
<dbReference type="SMR" id="B5ELY7"/>
<dbReference type="GeneID" id="65279714"/>
<dbReference type="KEGG" id="afe:Lferr_0505"/>
<dbReference type="eggNOG" id="COG0255">
    <property type="taxonomic scope" value="Bacteria"/>
</dbReference>
<dbReference type="HOGENOM" id="CLU_158491_1_0_6"/>
<dbReference type="GO" id="GO:1990904">
    <property type="term" value="C:ribonucleoprotein complex"/>
    <property type="evidence" value="ECO:0007669"/>
    <property type="project" value="UniProtKB-KW"/>
</dbReference>
<dbReference type="GO" id="GO:0005840">
    <property type="term" value="C:ribosome"/>
    <property type="evidence" value="ECO:0007669"/>
    <property type="project" value="UniProtKB-KW"/>
</dbReference>
<dbReference type="GO" id="GO:0003735">
    <property type="term" value="F:structural constituent of ribosome"/>
    <property type="evidence" value="ECO:0007669"/>
    <property type="project" value="InterPro"/>
</dbReference>
<dbReference type="GO" id="GO:0006412">
    <property type="term" value="P:translation"/>
    <property type="evidence" value="ECO:0007669"/>
    <property type="project" value="UniProtKB-UniRule"/>
</dbReference>
<dbReference type="CDD" id="cd00427">
    <property type="entry name" value="Ribosomal_L29_HIP"/>
    <property type="match status" value="1"/>
</dbReference>
<dbReference type="Gene3D" id="6.10.140.1970">
    <property type="match status" value="1"/>
</dbReference>
<dbReference type="HAMAP" id="MF_00374">
    <property type="entry name" value="Ribosomal_uL29"/>
    <property type="match status" value="1"/>
</dbReference>
<dbReference type="InterPro" id="IPR001854">
    <property type="entry name" value="Ribosomal_uL29"/>
</dbReference>
<dbReference type="InterPro" id="IPR018254">
    <property type="entry name" value="Ribosomal_uL29_CS"/>
</dbReference>
<dbReference type="InterPro" id="IPR036049">
    <property type="entry name" value="Ribosomal_uL29_sf"/>
</dbReference>
<dbReference type="NCBIfam" id="TIGR00012">
    <property type="entry name" value="L29"/>
    <property type="match status" value="1"/>
</dbReference>
<dbReference type="Pfam" id="PF00831">
    <property type="entry name" value="Ribosomal_L29"/>
    <property type="match status" value="1"/>
</dbReference>
<dbReference type="SUPFAM" id="SSF46561">
    <property type="entry name" value="Ribosomal protein L29 (L29p)"/>
    <property type="match status" value="1"/>
</dbReference>
<dbReference type="PROSITE" id="PS00579">
    <property type="entry name" value="RIBOSOMAL_L29"/>
    <property type="match status" value="1"/>
</dbReference>